<keyword id="KW-0963">Cytoplasm</keyword>
<keyword id="KW-0349">Heme</keyword>
<keyword id="KW-0408">Iron</keyword>
<keyword id="KW-0479">Metal-binding</keyword>
<keyword id="KW-0539">Nucleus</keyword>
<keyword id="KW-0560">Oxidoreductase</keyword>
<keyword id="KW-1185">Reference proteome</keyword>
<dbReference type="EC" id="1.7.2.-" evidence="2"/>
<dbReference type="EMBL" id="U94999">
    <property type="protein sequence ID" value="AAB82770.1"/>
    <property type="molecule type" value="Genomic_DNA"/>
</dbReference>
<dbReference type="EMBL" id="AC011560">
    <property type="protein sequence ID" value="AAG51381.1"/>
    <property type="molecule type" value="Genomic_DNA"/>
</dbReference>
<dbReference type="EMBL" id="AC013428">
    <property type="protein sequence ID" value="AAF76353.1"/>
    <property type="molecule type" value="Genomic_DNA"/>
</dbReference>
<dbReference type="EMBL" id="CP002686">
    <property type="protein sequence ID" value="AEE74919.1"/>
    <property type="molecule type" value="Genomic_DNA"/>
</dbReference>
<dbReference type="EMBL" id="AY087650">
    <property type="protein sequence ID" value="AAM65188.1"/>
    <property type="molecule type" value="mRNA"/>
</dbReference>
<dbReference type="RefSeq" id="NP_187663.1">
    <property type="nucleotide sequence ID" value="NM_111887.3"/>
</dbReference>
<dbReference type="SMR" id="O24521"/>
<dbReference type="FunCoup" id="O24521">
    <property type="interactions" value="193"/>
</dbReference>
<dbReference type="STRING" id="3702.O24521"/>
<dbReference type="PaxDb" id="3702-AT3G10520.1"/>
<dbReference type="ProteomicsDB" id="247164"/>
<dbReference type="EnsemblPlants" id="AT3G10520.1">
    <property type="protein sequence ID" value="AT3G10520.1"/>
    <property type="gene ID" value="AT3G10520"/>
</dbReference>
<dbReference type="GeneID" id="820216"/>
<dbReference type="Gramene" id="AT3G10520.1">
    <property type="protein sequence ID" value="AT3G10520.1"/>
    <property type="gene ID" value="AT3G10520"/>
</dbReference>
<dbReference type="KEGG" id="ath:AT3G10520"/>
<dbReference type="Araport" id="AT3G10520"/>
<dbReference type="TAIR" id="AT3G10520">
    <property type="gene designation" value="HB2"/>
</dbReference>
<dbReference type="eggNOG" id="KOG3378">
    <property type="taxonomic scope" value="Eukaryota"/>
</dbReference>
<dbReference type="HOGENOM" id="CLU_003827_11_2_1"/>
<dbReference type="InParanoid" id="O24521"/>
<dbReference type="OMA" id="WIRESWN"/>
<dbReference type="PhylomeDB" id="O24521"/>
<dbReference type="PRO" id="PR:O24521"/>
<dbReference type="Proteomes" id="UP000006548">
    <property type="component" value="Chromosome 3"/>
</dbReference>
<dbReference type="ExpressionAtlas" id="O24521">
    <property type="expression patterns" value="baseline and differential"/>
</dbReference>
<dbReference type="GO" id="GO:0005829">
    <property type="term" value="C:cytosol"/>
    <property type="evidence" value="ECO:0007005"/>
    <property type="project" value="TAIR"/>
</dbReference>
<dbReference type="GO" id="GO:0005634">
    <property type="term" value="C:nucleus"/>
    <property type="evidence" value="ECO:0007669"/>
    <property type="project" value="UniProtKB-SubCell"/>
</dbReference>
<dbReference type="GO" id="GO:0020037">
    <property type="term" value="F:heme binding"/>
    <property type="evidence" value="ECO:0007669"/>
    <property type="project" value="InterPro"/>
</dbReference>
<dbReference type="GO" id="GO:0046872">
    <property type="term" value="F:metal ion binding"/>
    <property type="evidence" value="ECO:0007669"/>
    <property type="project" value="UniProtKB-KW"/>
</dbReference>
<dbReference type="GO" id="GO:0016491">
    <property type="term" value="F:oxidoreductase activity"/>
    <property type="evidence" value="ECO:0007669"/>
    <property type="project" value="UniProtKB-KW"/>
</dbReference>
<dbReference type="GO" id="GO:0019825">
    <property type="term" value="F:oxygen binding"/>
    <property type="evidence" value="ECO:0007669"/>
    <property type="project" value="InterPro"/>
</dbReference>
<dbReference type="GO" id="GO:0005344">
    <property type="term" value="F:oxygen carrier activity"/>
    <property type="evidence" value="ECO:0000250"/>
    <property type="project" value="TAIR"/>
</dbReference>
<dbReference type="GO" id="GO:0006631">
    <property type="term" value="P:fatty acid metabolic process"/>
    <property type="evidence" value="ECO:0000315"/>
    <property type="project" value="TAIR"/>
</dbReference>
<dbReference type="GO" id="GO:0019432">
    <property type="term" value="P:triglyceride biosynthetic process"/>
    <property type="evidence" value="ECO:0000315"/>
    <property type="project" value="TAIR"/>
</dbReference>
<dbReference type="CDD" id="cd08923">
    <property type="entry name" value="class1-2_nsHbs_Lbs"/>
    <property type="match status" value="1"/>
</dbReference>
<dbReference type="FunFam" id="1.10.490.10:FF:000008">
    <property type="entry name" value="non-symbiotic hemoglobin 1"/>
    <property type="match status" value="1"/>
</dbReference>
<dbReference type="Gene3D" id="1.10.490.10">
    <property type="entry name" value="Globins"/>
    <property type="match status" value="1"/>
</dbReference>
<dbReference type="InterPro" id="IPR000971">
    <property type="entry name" value="Globin"/>
</dbReference>
<dbReference type="InterPro" id="IPR009050">
    <property type="entry name" value="Globin-like_sf"/>
</dbReference>
<dbReference type="InterPro" id="IPR012292">
    <property type="entry name" value="Globin/Proto"/>
</dbReference>
<dbReference type="InterPro" id="IPR001032">
    <property type="entry name" value="Leghaemoglobin-like"/>
</dbReference>
<dbReference type="InterPro" id="IPR019824">
    <property type="entry name" value="Leghaemoglobin_Fe_BS"/>
</dbReference>
<dbReference type="PANTHER" id="PTHR22924">
    <property type="entry name" value="LEGHEMOGLOBIN-RELATED"/>
    <property type="match status" value="1"/>
</dbReference>
<dbReference type="PANTHER" id="PTHR22924:SF92">
    <property type="entry name" value="NON-SYMBIOTIC HEMOGLOBIN 2"/>
    <property type="match status" value="1"/>
</dbReference>
<dbReference type="Pfam" id="PF00042">
    <property type="entry name" value="Globin"/>
    <property type="match status" value="1"/>
</dbReference>
<dbReference type="PRINTS" id="PR00188">
    <property type="entry name" value="PLANTGLOBIN"/>
</dbReference>
<dbReference type="SUPFAM" id="SSF46458">
    <property type="entry name" value="Globin-like"/>
    <property type="match status" value="1"/>
</dbReference>
<dbReference type="PROSITE" id="PS01033">
    <property type="entry name" value="GLOBIN"/>
    <property type="match status" value="1"/>
</dbReference>
<dbReference type="PROSITE" id="PS00208">
    <property type="entry name" value="PLANT_GLOBIN"/>
    <property type="match status" value="1"/>
</dbReference>
<feature type="chain" id="PRO_0000193012" description="Anaerobic nitrite reductase AHB2">
    <location>
        <begin position="1"/>
        <end position="158"/>
    </location>
</feature>
<feature type="domain" description="Globin" evidence="5">
    <location>
        <begin position="5"/>
        <end position="154"/>
    </location>
</feature>
<feature type="short sequence motif" description="Homodimerization" evidence="2">
    <location>
        <begin position="38"/>
        <end position="42"/>
    </location>
</feature>
<feature type="short sequence motif" description="Homodimerization" evidence="2">
    <location>
        <begin position="108"/>
        <end position="120"/>
    </location>
</feature>
<feature type="binding site" evidence="3">
    <location>
        <position position="48"/>
    </location>
    <ligand>
        <name>heme b</name>
        <dbReference type="ChEBI" id="CHEBI:60344"/>
    </ligand>
</feature>
<feature type="binding site" evidence="2">
    <location>
        <position position="62"/>
    </location>
    <ligand>
        <name>heme b</name>
        <dbReference type="ChEBI" id="CHEBI:60344"/>
    </ligand>
</feature>
<feature type="binding site" description="distal binding residue" evidence="5">
    <location>
        <position position="66"/>
    </location>
    <ligand>
        <name>heme b</name>
        <dbReference type="ChEBI" id="CHEBI:60344"/>
    </ligand>
    <ligandPart>
        <name>Fe</name>
        <dbReference type="ChEBI" id="CHEBI:18248"/>
    </ligandPart>
</feature>
<feature type="binding site" description="proximal binding residue" evidence="5">
    <location>
        <position position="101"/>
    </location>
    <ligand>
        <name>heme b</name>
        <dbReference type="ChEBI" id="CHEBI:60344"/>
    </ligand>
    <ligandPart>
        <name>Fe</name>
        <dbReference type="ChEBI" id="CHEBI:18248"/>
    </ligandPart>
</feature>
<comment type="function">
    <text evidence="2 4">Phytoglobin that reduces nitrite to nitric oxide (NO) under anoxic conditions (e.g. during flooding or in waterlogged soil) (By similarity). May not function as an oxygen storage or transport protein (By similarity). Has an unusually high affinity for O(2) through an hexacoordinate heme iron because of a very low dissociation constant (By similarity).</text>
</comment>
<comment type="catalytic activity">
    <reaction evidence="2">
        <text>Fe(III)-heme b-[protein] + nitric oxide + H2O = Fe(II)-heme b-[protein] + nitrite + 2 H(+)</text>
        <dbReference type="Rhea" id="RHEA:77711"/>
        <dbReference type="Rhea" id="RHEA-COMP:18975"/>
        <dbReference type="Rhea" id="RHEA-COMP:18976"/>
        <dbReference type="ChEBI" id="CHEBI:15377"/>
        <dbReference type="ChEBI" id="CHEBI:15378"/>
        <dbReference type="ChEBI" id="CHEBI:16301"/>
        <dbReference type="ChEBI" id="CHEBI:16480"/>
        <dbReference type="ChEBI" id="CHEBI:55376"/>
        <dbReference type="ChEBI" id="CHEBI:60344"/>
    </reaction>
    <physiologicalReaction direction="right-to-left" evidence="2">
        <dbReference type="Rhea" id="RHEA:77713"/>
    </physiologicalReaction>
</comment>
<comment type="cofactor">
    <cofactor evidence="3">
        <name>heme b</name>
        <dbReference type="ChEBI" id="CHEBI:60344"/>
    </cofactor>
    <text evidence="3">Binds 1 heme group per subunit.</text>
</comment>
<comment type="subunit">
    <text evidence="7">Unable to dimerize.</text>
</comment>
<comment type="subcellular location">
    <subcellularLocation>
        <location evidence="1">Cytoplasm</location>
    </subcellularLocation>
    <subcellularLocation>
        <location evidence="1">Nucleus</location>
    </subcellularLocation>
</comment>
<comment type="tissue specificity">
    <text>Expressed in rosette leaves but not in roots.</text>
</comment>
<comment type="induction">
    <text>By low temperature but not by low oxygen levels, dehydration, heat shock, wounding or oxidative stress.</text>
</comment>
<comment type="similarity">
    <text evidence="7">Belongs to the plant globin family.</text>
</comment>
<reference key="1">
    <citation type="journal article" date="1997" name="Proc. Natl. Acad. Sci. U.S.A.">
        <title>Two hemoglobin genes in Arabidopsis thaliana: the evolutionary origins of leghemoglobins.</title>
        <authorList>
            <person name="Trevaskis B."/>
            <person name="Watts R.A."/>
            <person name="Andersson C.R."/>
            <person name="Llewellyn D.J."/>
            <person name="Hargrove M.S."/>
            <person name="Olson J.S."/>
            <person name="Dennis E.S."/>
            <person name="Peacock W.J."/>
        </authorList>
    </citation>
    <scope>NUCLEOTIDE SEQUENCE [GENOMIC DNA]</scope>
    <scope>CHARACTERIZATION</scope>
    <source>
        <strain>cv. C24</strain>
    </source>
</reference>
<reference key="2">
    <citation type="journal article" date="2000" name="Nature">
        <title>Sequence and analysis of chromosome 3 of the plant Arabidopsis thaliana.</title>
        <authorList>
            <person name="Salanoubat M."/>
            <person name="Lemcke K."/>
            <person name="Rieger M."/>
            <person name="Ansorge W."/>
            <person name="Unseld M."/>
            <person name="Fartmann B."/>
            <person name="Valle G."/>
            <person name="Bloecker H."/>
            <person name="Perez-Alonso M."/>
            <person name="Obermaier B."/>
            <person name="Delseny M."/>
            <person name="Boutry M."/>
            <person name="Grivell L.A."/>
            <person name="Mache R."/>
            <person name="Puigdomenech P."/>
            <person name="De Simone V."/>
            <person name="Choisne N."/>
            <person name="Artiguenave F."/>
            <person name="Robert C."/>
            <person name="Brottier P."/>
            <person name="Wincker P."/>
            <person name="Cattolico L."/>
            <person name="Weissenbach J."/>
            <person name="Saurin W."/>
            <person name="Quetier F."/>
            <person name="Schaefer M."/>
            <person name="Mueller-Auer S."/>
            <person name="Gabel C."/>
            <person name="Fuchs M."/>
            <person name="Benes V."/>
            <person name="Wurmbach E."/>
            <person name="Drzonek H."/>
            <person name="Erfle H."/>
            <person name="Jordan N."/>
            <person name="Bangert S."/>
            <person name="Wiedelmann R."/>
            <person name="Kranz H."/>
            <person name="Voss H."/>
            <person name="Holland R."/>
            <person name="Brandt P."/>
            <person name="Nyakatura G."/>
            <person name="Vezzi A."/>
            <person name="D'Angelo M."/>
            <person name="Pallavicini A."/>
            <person name="Toppo S."/>
            <person name="Simionati B."/>
            <person name="Conrad A."/>
            <person name="Hornischer K."/>
            <person name="Kauer G."/>
            <person name="Loehnert T.-H."/>
            <person name="Nordsiek G."/>
            <person name="Reichelt J."/>
            <person name="Scharfe M."/>
            <person name="Schoen O."/>
            <person name="Bargues M."/>
            <person name="Terol J."/>
            <person name="Climent J."/>
            <person name="Navarro P."/>
            <person name="Collado C."/>
            <person name="Perez-Perez A."/>
            <person name="Ottenwaelder B."/>
            <person name="Duchemin D."/>
            <person name="Cooke R."/>
            <person name="Laudie M."/>
            <person name="Berger-Llauro C."/>
            <person name="Purnelle B."/>
            <person name="Masuy D."/>
            <person name="de Haan M."/>
            <person name="Maarse A.C."/>
            <person name="Alcaraz J.-P."/>
            <person name="Cottet A."/>
            <person name="Casacuberta E."/>
            <person name="Monfort A."/>
            <person name="Argiriou A."/>
            <person name="Flores M."/>
            <person name="Liguori R."/>
            <person name="Vitale D."/>
            <person name="Mannhaupt G."/>
            <person name="Haase D."/>
            <person name="Schoof H."/>
            <person name="Rudd S."/>
            <person name="Zaccaria P."/>
            <person name="Mewes H.-W."/>
            <person name="Mayer K.F.X."/>
            <person name="Kaul S."/>
            <person name="Town C.D."/>
            <person name="Koo H.L."/>
            <person name="Tallon L.J."/>
            <person name="Jenkins J."/>
            <person name="Rooney T."/>
            <person name="Rizzo M."/>
            <person name="Walts A."/>
            <person name="Utterback T."/>
            <person name="Fujii C.Y."/>
            <person name="Shea T.P."/>
            <person name="Creasy T.H."/>
            <person name="Haas B."/>
            <person name="Maiti R."/>
            <person name="Wu D."/>
            <person name="Peterson J."/>
            <person name="Van Aken S."/>
            <person name="Pai G."/>
            <person name="Militscher J."/>
            <person name="Sellers P."/>
            <person name="Gill J.E."/>
            <person name="Feldblyum T.V."/>
            <person name="Preuss D."/>
            <person name="Lin X."/>
            <person name="Nierman W.C."/>
            <person name="Salzberg S.L."/>
            <person name="White O."/>
            <person name="Venter J.C."/>
            <person name="Fraser C.M."/>
            <person name="Kaneko T."/>
            <person name="Nakamura Y."/>
            <person name="Sato S."/>
            <person name="Kato T."/>
            <person name="Asamizu E."/>
            <person name="Sasamoto S."/>
            <person name="Kimura T."/>
            <person name="Idesawa K."/>
            <person name="Kawashima K."/>
            <person name="Kishida Y."/>
            <person name="Kiyokawa C."/>
            <person name="Kohara M."/>
            <person name="Matsumoto M."/>
            <person name="Matsuno A."/>
            <person name="Muraki A."/>
            <person name="Nakayama S."/>
            <person name="Nakazaki N."/>
            <person name="Shinpo S."/>
            <person name="Takeuchi C."/>
            <person name="Wada T."/>
            <person name="Watanabe A."/>
            <person name="Yamada M."/>
            <person name="Yasuda M."/>
            <person name="Tabata S."/>
        </authorList>
    </citation>
    <scope>NUCLEOTIDE SEQUENCE [LARGE SCALE GENOMIC DNA]</scope>
    <source>
        <strain>cv. Columbia</strain>
    </source>
</reference>
<reference key="3">
    <citation type="journal article" date="2017" name="Plant J.">
        <title>Araport11: a complete reannotation of the Arabidopsis thaliana reference genome.</title>
        <authorList>
            <person name="Cheng C.Y."/>
            <person name="Krishnakumar V."/>
            <person name="Chan A.P."/>
            <person name="Thibaud-Nissen F."/>
            <person name="Schobel S."/>
            <person name="Town C.D."/>
        </authorList>
    </citation>
    <scope>GENOME REANNOTATION</scope>
    <source>
        <strain>cv. Columbia</strain>
    </source>
</reference>
<reference key="4">
    <citation type="submission" date="2002-03" db="EMBL/GenBank/DDBJ databases">
        <title>Full-length cDNA from Arabidopsis thaliana.</title>
        <authorList>
            <person name="Brover V.V."/>
            <person name="Troukhan M.E."/>
            <person name="Alexandrov N.A."/>
            <person name="Lu Y.-P."/>
            <person name="Flavell R.B."/>
            <person name="Feldmann K.A."/>
        </authorList>
    </citation>
    <scope>NUCLEOTIDE SEQUENCE [LARGE SCALE MRNA]</scope>
</reference>
<protein>
    <recommendedName>
        <fullName evidence="2">Anaerobic nitrite reductase AHB2</fullName>
        <ecNumber evidence="2">1.7.2.-</ecNumber>
    </recommendedName>
    <alternativeName>
        <fullName>ARAth GLB2</fullName>
        <shortName evidence="6">Hb2</shortName>
    </alternativeName>
    <alternativeName>
        <fullName evidence="6">Non-symbiotic hemoglobin 2</fullName>
    </alternativeName>
</protein>
<sequence>MGEIGFTEKQEALVKESWEILKQDIPKYSLHFFSQILEIAPAAKGLFSFLRDSDEVPHNNPKLKAHAVKVFKMTCETAIQLREEGKVVVADTTLQYLGSIHLKSGVIDPHFEVVKEALLRTLKEGLGEKYNEEVEGAWSQAYDHLALAIKTEMKQEES</sequence>
<gene>
    <name evidence="6" type="primary">AHB2</name>
    <name type="synonym">GLB2</name>
    <name evidence="8" type="ordered locus">At3g10520</name>
    <name evidence="10" type="ORF">F13M14.20</name>
    <name evidence="9" type="ORF">F18K10.9</name>
</gene>
<name>HBL2_ARATH</name>
<accession>O24521</accession>
<proteinExistence type="evidence at protein level"/>
<evidence type="ECO:0000250" key="1">
    <source>
        <dbReference type="UniProtKB" id="A2XE98"/>
    </source>
</evidence>
<evidence type="ECO:0000250" key="2">
    <source>
        <dbReference type="UniProtKB" id="O04986"/>
    </source>
</evidence>
<evidence type="ECO:0000250" key="3">
    <source>
        <dbReference type="UniProtKB" id="P68168"/>
    </source>
</evidence>
<evidence type="ECO:0000250" key="4">
    <source>
        <dbReference type="UniProtKB" id="Q42831"/>
    </source>
</evidence>
<evidence type="ECO:0000255" key="5">
    <source>
        <dbReference type="PROSITE-ProRule" id="PRU00238"/>
    </source>
</evidence>
<evidence type="ECO:0000303" key="6">
    <source>
    </source>
</evidence>
<evidence type="ECO:0000305" key="7"/>
<evidence type="ECO:0000312" key="8">
    <source>
        <dbReference type="Araport" id="AT3G10520"/>
    </source>
</evidence>
<evidence type="ECO:0000312" key="9">
    <source>
        <dbReference type="EMBL" id="AAF76353.1"/>
    </source>
</evidence>
<evidence type="ECO:0000312" key="10">
    <source>
        <dbReference type="EMBL" id="AAG51381.1"/>
    </source>
</evidence>
<organism>
    <name type="scientific">Arabidopsis thaliana</name>
    <name type="common">Mouse-ear cress</name>
    <dbReference type="NCBI Taxonomy" id="3702"/>
    <lineage>
        <taxon>Eukaryota</taxon>
        <taxon>Viridiplantae</taxon>
        <taxon>Streptophyta</taxon>
        <taxon>Embryophyta</taxon>
        <taxon>Tracheophyta</taxon>
        <taxon>Spermatophyta</taxon>
        <taxon>Magnoliopsida</taxon>
        <taxon>eudicotyledons</taxon>
        <taxon>Gunneridae</taxon>
        <taxon>Pentapetalae</taxon>
        <taxon>rosids</taxon>
        <taxon>malvids</taxon>
        <taxon>Brassicales</taxon>
        <taxon>Brassicaceae</taxon>
        <taxon>Camelineae</taxon>
        <taxon>Arabidopsis</taxon>
    </lineage>
</organism>